<sequence>MTYLQQHARSIAEPAAFWAEQARSLAWYQAPANILESLPDGTHRWFADGRLNSAYLALDRQIEEGRGEQTALIYDSPVTGTQDRYSYLRLRDEVARLAGALRALGVGKGDRVIIYMPMVPQAAMAMLACARLGAVHSVVFGGFAPYELALRIDDATPKLVLTASCGLEFDRVIEYKPLVDKALELAIHQPAHVMVWQRPQAPARLHPGRDLDWQDCLAAAEPADPLPVASGDPLYIMYTSGTTGKPKGIVRDNGGHAVAVRYAVRTIYGMQAGDVWWGISDVGWVVGHSLIVYGPLMCGCTTVFYEGKPVRTPDAGAYWRVIEEHRVNSLFCAPTAIRAIRKEDPHGERVKRYDLGSLRHLFLAGEKLDSSTQHWLEEHTGRPVHDHWWQTETGWPVTAPCIGIAGHDLRAGSTNRAVPGYHVQVLDDEGRPLGANRQGAIVIALPLPPGCAQTLWGDHPRYLQAYLGNYPGYYHTGDGGYLDEDGFVYIMGRTDDVINVSGHRLSTGEMEERVAQHQAVAECAVIGVRDELKGHVPLGLVVLKDDAGIAAEQLQRELVALVREQIGALACFQRVVVVKRLPKTRSGKILRAVLRKIADGEDYAAPSTIDDPTILGEIEAALRVRKAG</sequence>
<feature type="chain" id="PRO_0000193218" description="Uncharacterized protein PA3568">
    <location>
        <begin position="1"/>
        <end position="628"/>
    </location>
</feature>
<organism>
    <name type="scientific">Pseudomonas aeruginosa (strain ATCC 15692 / DSM 22644 / CIP 104116 / JCM 14847 / LMG 12228 / 1C / PRS 101 / PAO1)</name>
    <dbReference type="NCBI Taxonomy" id="208964"/>
    <lineage>
        <taxon>Bacteria</taxon>
        <taxon>Pseudomonadati</taxon>
        <taxon>Pseudomonadota</taxon>
        <taxon>Gammaproteobacteria</taxon>
        <taxon>Pseudomonadales</taxon>
        <taxon>Pseudomonadaceae</taxon>
        <taxon>Pseudomonas</taxon>
    </lineage>
</organism>
<keyword id="KW-1185">Reference proteome</keyword>
<dbReference type="EMBL" id="AE004091">
    <property type="protein sequence ID" value="AAG06956.1"/>
    <property type="molecule type" value="Genomic_DNA"/>
</dbReference>
<dbReference type="EMBL" id="M84911">
    <property type="protein sequence ID" value="AAA25893.1"/>
    <property type="molecule type" value="Genomic_DNA"/>
</dbReference>
<dbReference type="PIR" id="H83200">
    <property type="entry name" value="H83200"/>
</dbReference>
<dbReference type="PIR" id="S27604">
    <property type="entry name" value="D42902"/>
</dbReference>
<dbReference type="RefSeq" id="NP_252258.1">
    <property type="nucleotide sequence ID" value="NC_002516.2"/>
</dbReference>
<dbReference type="RefSeq" id="WP_003104354.1">
    <property type="nucleotide sequence ID" value="NZ_QZGE01000001.1"/>
</dbReference>
<dbReference type="SMR" id="P28812"/>
<dbReference type="FunCoup" id="P28812">
    <property type="interactions" value="148"/>
</dbReference>
<dbReference type="STRING" id="208964.PA3568"/>
<dbReference type="PaxDb" id="208964-PA3568"/>
<dbReference type="GeneID" id="878696"/>
<dbReference type="KEGG" id="pae:PA3568"/>
<dbReference type="PATRIC" id="fig|208964.12.peg.3734"/>
<dbReference type="PseudoCAP" id="PA3568"/>
<dbReference type="HOGENOM" id="CLU_000022_3_5_6"/>
<dbReference type="InParanoid" id="P28812"/>
<dbReference type="OrthoDB" id="9803968at2"/>
<dbReference type="PhylomeDB" id="P28812"/>
<dbReference type="BioCyc" id="PAER208964:G1FZ6-3636-MONOMER"/>
<dbReference type="Proteomes" id="UP000002438">
    <property type="component" value="Chromosome"/>
</dbReference>
<dbReference type="GO" id="GO:0050218">
    <property type="term" value="F:propionate-CoA ligase activity"/>
    <property type="evidence" value="ECO:0000318"/>
    <property type="project" value="GO_Central"/>
</dbReference>
<dbReference type="CDD" id="cd05967">
    <property type="entry name" value="PrpE"/>
    <property type="match status" value="1"/>
</dbReference>
<dbReference type="FunFam" id="3.40.50.12780:FF:000011">
    <property type="entry name" value="Acetyl-coenzyme A synthetase 2-like, mitochondrial"/>
    <property type="match status" value="1"/>
</dbReference>
<dbReference type="FunFam" id="3.30.300.30:FF:000017">
    <property type="entry name" value="Acyl-CoA synthetase short-chain family member 3"/>
    <property type="match status" value="1"/>
</dbReference>
<dbReference type="Gene3D" id="3.30.300.30">
    <property type="match status" value="1"/>
</dbReference>
<dbReference type="Gene3D" id="3.40.50.12780">
    <property type="entry name" value="N-terminal domain of ligase-like"/>
    <property type="match status" value="1"/>
</dbReference>
<dbReference type="InterPro" id="IPR032387">
    <property type="entry name" value="ACAS_N"/>
</dbReference>
<dbReference type="InterPro" id="IPR025110">
    <property type="entry name" value="AMP-bd_C"/>
</dbReference>
<dbReference type="InterPro" id="IPR045851">
    <property type="entry name" value="AMP-bd_C_sf"/>
</dbReference>
<dbReference type="InterPro" id="IPR020845">
    <property type="entry name" value="AMP-binding_CS"/>
</dbReference>
<dbReference type="InterPro" id="IPR000873">
    <property type="entry name" value="AMP-dep_synth/lig_dom"/>
</dbReference>
<dbReference type="InterPro" id="IPR042099">
    <property type="entry name" value="ANL_N_sf"/>
</dbReference>
<dbReference type="PANTHER" id="PTHR43347">
    <property type="entry name" value="ACYL-COA SYNTHETASE"/>
    <property type="match status" value="1"/>
</dbReference>
<dbReference type="PANTHER" id="PTHR43347:SF3">
    <property type="entry name" value="ACYL-COA SYNTHETASE SHORT-CHAIN FAMILY MEMBER 3, MITOCHONDRIAL"/>
    <property type="match status" value="1"/>
</dbReference>
<dbReference type="Pfam" id="PF16177">
    <property type="entry name" value="ACAS_N"/>
    <property type="match status" value="1"/>
</dbReference>
<dbReference type="Pfam" id="PF00501">
    <property type="entry name" value="AMP-binding"/>
    <property type="match status" value="1"/>
</dbReference>
<dbReference type="Pfam" id="PF13193">
    <property type="entry name" value="AMP-binding_C"/>
    <property type="match status" value="1"/>
</dbReference>
<dbReference type="SUPFAM" id="SSF56801">
    <property type="entry name" value="Acetyl-CoA synthetase-like"/>
    <property type="match status" value="1"/>
</dbReference>
<dbReference type="PROSITE" id="PS00455">
    <property type="entry name" value="AMP_BINDING"/>
    <property type="match status" value="1"/>
</dbReference>
<comment type="similarity">
    <text evidence="1">Belongs to the ATP-dependent AMP-binding enzyme family.</text>
</comment>
<evidence type="ECO:0000305" key="1"/>
<gene>
    <name type="ordered locus">PA3568</name>
</gene>
<proteinExistence type="inferred from homology"/>
<name>Y3568_PSEAE</name>
<reference key="1">
    <citation type="journal article" date="2000" name="Nature">
        <title>Complete genome sequence of Pseudomonas aeruginosa PAO1, an opportunistic pathogen.</title>
        <authorList>
            <person name="Stover C.K."/>
            <person name="Pham X.-Q.T."/>
            <person name="Erwin A.L."/>
            <person name="Mizoguchi S.D."/>
            <person name="Warrener P."/>
            <person name="Hickey M.J."/>
            <person name="Brinkman F.S.L."/>
            <person name="Hufnagle W.O."/>
            <person name="Kowalik D.J."/>
            <person name="Lagrou M."/>
            <person name="Garber R.L."/>
            <person name="Goltry L."/>
            <person name="Tolentino E."/>
            <person name="Westbrock-Wadman S."/>
            <person name="Yuan Y."/>
            <person name="Brody L.L."/>
            <person name="Coulter S.N."/>
            <person name="Folger K.R."/>
            <person name="Kas A."/>
            <person name="Larbig K."/>
            <person name="Lim R.M."/>
            <person name="Smith K.A."/>
            <person name="Spencer D.H."/>
            <person name="Wong G.K.-S."/>
            <person name="Wu Z."/>
            <person name="Paulsen I.T."/>
            <person name="Reizer J."/>
            <person name="Saier M.H. Jr."/>
            <person name="Hancock R.E.W."/>
            <person name="Lory S."/>
            <person name="Olson M.V."/>
        </authorList>
    </citation>
    <scope>NUCLEOTIDE SEQUENCE [LARGE SCALE GENOMIC DNA]</scope>
    <source>
        <strain>ATCC 15692 / DSM 22644 / CIP 104116 / JCM 14847 / LMG 12228 / 1C / PRS 101 / PAO1</strain>
    </source>
</reference>
<reference key="2">
    <citation type="journal article" date="1992" name="J. Biol. Chem.">
        <title>Characterization of the mmsAB operon of Pseudomonas aeruginosa PAO encoding methylmalonate-semialdehyde dehydrogenase and 3-hydroxyisobutyrate dehydrogenase.</title>
        <authorList>
            <person name="Steele M.I."/>
            <person name="Lorenz D."/>
            <person name="Hatter K."/>
            <person name="Park A."/>
            <person name="Sokatch J.R."/>
        </authorList>
    </citation>
    <scope>NUCLEOTIDE SEQUENCE [GENOMIC DNA] OF 1-464</scope>
    <source>
        <strain>ATCC 15692 / DSM 22644 / CIP 104116 / JCM 14847 / LMG 12228 / 1C / PRS 101 / PAO1</strain>
    </source>
</reference>
<accession>P28812</accession>
<accession>Q9HY49</accession>
<protein>
    <recommendedName>
        <fullName>Uncharacterized protein PA3568</fullName>
    </recommendedName>
</protein>